<feature type="peptide" id="PRO_0000043860" description="Uperin-3.7">
    <location>
        <begin position="1"/>
        <end position="17"/>
    </location>
</feature>
<feature type="modified residue" description="Valine amide" evidence="1">
    <location>
        <position position="17"/>
    </location>
</feature>
<sequence length="17" mass="1845">GVGDIFRKIVSTIKNVV</sequence>
<comment type="subcellular location">
    <subcellularLocation>
        <location>Secreted</location>
    </subcellularLocation>
</comment>
<comment type="tissue specificity">
    <text>Expressed by the skin dorsal glands.</text>
</comment>
<comment type="mass spectrometry" mass="1844.0" method="FAB" evidence="1"/>
<keyword id="KW-0027">Amidation</keyword>
<keyword id="KW-0878">Amphibian defense peptide</keyword>
<keyword id="KW-0903">Direct protein sequencing</keyword>
<keyword id="KW-0964">Secreted</keyword>
<name>UPE37_UPEMJ</name>
<organism>
    <name type="scientific">Uperoleia mjobergii</name>
    <name type="common">Mjoberg's toadlet</name>
    <name type="synonym">Pseudophryne mjobergii</name>
    <dbReference type="NCBI Taxonomy" id="104954"/>
    <lineage>
        <taxon>Eukaryota</taxon>
        <taxon>Metazoa</taxon>
        <taxon>Chordata</taxon>
        <taxon>Craniata</taxon>
        <taxon>Vertebrata</taxon>
        <taxon>Euteleostomi</taxon>
        <taxon>Amphibia</taxon>
        <taxon>Batrachia</taxon>
        <taxon>Anura</taxon>
        <taxon>Neobatrachia</taxon>
        <taxon>Myobatrachoidea</taxon>
        <taxon>Myobatrachidae</taxon>
        <taxon>Myobatrachinae</taxon>
        <taxon>Uperoleia</taxon>
    </lineage>
</organism>
<accession>P82044</accession>
<protein>
    <recommendedName>
        <fullName>Uperin-3.7</fullName>
    </recommendedName>
</protein>
<proteinExistence type="evidence at protein level"/>
<dbReference type="GO" id="GO:0005576">
    <property type="term" value="C:extracellular region"/>
    <property type="evidence" value="ECO:0007669"/>
    <property type="project" value="UniProtKB-SubCell"/>
</dbReference>
<dbReference type="GO" id="GO:0006952">
    <property type="term" value="P:defense response"/>
    <property type="evidence" value="ECO:0007669"/>
    <property type="project" value="UniProtKB-KW"/>
</dbReference>
<dbReference type="InterPro" id="IPR012527">
    <property type="entry name" value="Antimicrobial_8"/>
</dbReference>
<dbReference type="Pfam" id="PF08103">
    <property type="entry name" value="Antimicrobial_8"/>
    <property type="match status" value="1"/>
</dbReference>
<reference key="1">
    <citation type="journal article" date="1996" name="Aust. J. Chem.">
        <title>New antibiotic uperin peptides from the dorsal glands of the australian toadlet Uperoleia mjobergii.</title>
        <authorList>
            <person name="Bradford A.M."/>
            <person name="Bowie J.H."/>
            <person name="Tyler M.J."/>
            <person name="Wallace J.C."/>
        </authorList>
    </citation>
    <scope>PROTEIN SEQUENCE</scope>
    <scope>AMIDATION AT VAL-17</scope>
    <scope>MASS SPECTROMETRY</scope>
    <source>
        <tissue>Skin secretion</tissue>
    </source>
</reference>
<evidence type="ECO:0000269" key="1">
    <source ref="1"/>
</evidence>